<accession>Q81VQ7</accession>
<accession>Q6I4R1</accession>
<accession>Q6KYF7</accession>
<feature type="chain" id="PRO_0000095728" description="Translation initiation factor IF-1">
    <location>
        <begin position="1"/>
        <end position="72"/>
    </location>
</feature>
<feature type="domain" description="S1-like" evidence="1">
    <location>
        <begin position="1"/>
        <end position="72"/>
    </location>
</feature>
<feature type="modified residue" description="Phosphotyrosine" evidence="1">
    <location>
        <position position="60"/>
    </location>
</feature>
<protein>
    <recommendedName>
        <fullName evidence="1">Translation initiation factor IF-1</fullName>
    </recommendedName>
</protein>
<gene>
    <name evidence="1" type="primary">infA</name>
    <name type="ordered locus">BA_0133</name>
    <name type="ordered locus">GBAA_0133</name>
    <name type="ordered locus">BAS0133</name>
</gene>
<comment type="function">
    <text evidence="1">One of the essential components for the initiation of protein synthesis. Stabilizes the binding of IF-2 and IF-3 on the 30S subunit to which N-formylmethionyl-tRNA(fMet) subsequently binds. Helps modulate mRNA selection, yielding the 30S pre-initiation complex (PIC). Upon addition of the 50S ribosomal subunit IF-1, IF-2 and IF-3 are released leaving the mature 70S translation initiation complex.</text>
</comment>
<comment type="subunit">
    <text evidence="1">Component of the 30S ribosomal translation pre-initiation complex which assembles on the 30S ribosome in the order IF-2 and IF-3, IF-1 and N-formylmethionyl-tRNA(fMet); mRNA recruitment can occur at any time during PIC assembly.</text>
</comment>
<comment type="subcellular location">
    <subcellularLocation>
        <location evidence="1">Cytoplasm</location>
    </subcellularLocation>
</comment>
<comment type="similarity">
    <text evidence="1">Belongs to the IF-1 family.</text>
</comment>
<evidence type="ECO:0000255" key="1">
    <source>
        <dbReference type="HAMAP-Rule" id="MF_00075"/>
    </source>
</evidence>
<organism>
    <name type="scientific">Bacillus anthracis</name>
    <dbReference type="NCBI Taxonomy" id="1392"/>
    <lineage>
        <taxon>Bacteria</taxon>
        <taxon>Bacillati</taxon>
        <taxon>Bacillota</taxon>
        <taxon>Bacilli</taxon>
        <taxon>Bacillales</taxon>
        <taxon>Bacillaceae</taxon>
        <taxon>Bacillus</taxon>
        <taxon>Bacillus cereus group</taxon>
    </lineage>
</organism>
<name>IF1_BACAN</name>
<keyword id="KW-0963">Cytoplasm</keyword>
<keyword id="KW-0396">Initiation factor</keyword>
<keyword id="KW-0597">Phosphoprotein</keyword>
<keyword id="KW-0648">Protein biosynthesis</keyword>
<keyword id="KW-1185">Reference proteome</keyword>
<keyword id="KW-0694">RNA-binding</keyword>
<keyword id="KW-0699">rRNA-binding</keyword>
<sequence length="72" mass="8186">MAKDDVIEVEGTVLETLPNAMFKVELENGHVVLAHVSGKIRMNFIRILPGDKVTVELSPYDLNRGRITYRFK</sequence>
<dbReference type="EMBL" id="AE016879">
    <property type="protein sequence ID" value="AAP24187.1"/>
    <property type="molecule type" value="Genomic_DNA"/>
</dbReference>
<dbReference type="EMBL" id="AE017334">
    <property type="protein sequence ID" value="AAT29213.1"/>
    <property type="molecule type" value="Genomic_DNA"/>
</dbReference>
<dbReference type="EMBL" id="AE017225">
    <property type="protein sequence ID" value="AAT52470.1"/>
    <property type="molecule type" value="Genomic_DNA"/>
</dbReference>
<dbReference type="RefSeq" id="NP_842701.1">
    <property type="nucleotide sequence ID" value="NC_003997.3"/>
</dbReference>
<dbReference type="RefSeq" id="WP_001029884.1">
    <property type="nucleotide sequence ID" value="NZ_WXXJ01000051.1"/>
</dbReference>
<dbReference type="RefSeq" id="YP_026419.1">
    <property type="nucleotide sequence ID" value="NC_005945.1"/>
</dbReference>
<dbReference type="SMR" id="Q81VQ7"/>
<dbReference type="STRING" id="261594.GBAA_0133"/>
<dbReference type="DNASU" id="1087039"/>
<dbReference type="GeneID" id="93010920"/>
<dbReference type="KEGG" id="ban:BA_0133"/>
<dbReference type="KEGG" id="bar:GBAA_0133"/>
<dbReference type="KEGG" id="bat:BAS0133"/>
<dbReference type="PATRIC" id="fig|198094.11.peg.130"/>
<dbReference type="eggNOG" id="COG0361">
    <property type="taxonomic scope" value="Bacteria"/>
</dbReference>
<dbReference type="HOGENOM" id="CLU_151267_1_0_9"/>
<dbReference type="OMA" id="EGHQCLC"/>
<dbReference type="OrthoDB" id="9803250at2"/>
<dbReference type="Proteomes" id="UP000000427">
    <property type="component" value="Chromosome"/>
</dbReference>
<dbReference type="Proteomes" id="UP000000594">
    <property type="component" value="Chromosome"/>
</dbReference>
<dbReference type="GO" id="GO:0005829">
    <property type="term" value="C:cytosol"/>
    <property type="evidence" value="ECO:0007669"/>
    <property type="project" value="TreeGrafter"/>
</dbReference>
<dbReference type="GO" id="GO:0043022">
    <property type="term" value="F:ribosome binding"/>
    <property type="evidence" value="ECO:0007669"/>
    <property type="project" value="UniProtKB-UniRule"/>
</dbReference>
<dbReference type="GO" id="GO:0019843">
    <property type="term" value="F:rRNA binding"/>
    <property type="evidence" value="ECO:0007669"/>
    <property type="project" value="UniProtKB-UniRule"/>
</dbReference>
<dbReference type="GO" id="GO:0003743">
    <property type="term" value="F:translation initiation factor activity"/>
    <property type="evidence" value="ECO:0007669"/>
    <property type="project" value="UniProtKB-UniRule"/>
</dbReference>
<dbReference type="CDD" id="cd04451">
    <property type="entry name" value="S1_IF1"/>
    <property type="match status" value="1"/>
</dbReference>
<dbReference type="FunFam" id="2.40.50.140:FF:000002">
    <property type="entry name" value="Translation initiation factor IF-1"/>
    <property type="match status" value="1"/>
</dbReference>
<dbReference type="Gene3D" id="2.40.50.140">
    <property type="entry name" value="Nucleic acid-binding proteins"/>
    <property type="match status" value="1"/>
</dbReference>
<dbReference type="HAMAP" id="MF_00075">
    <property type="entry name" value="IF_1"/>
    <property type="match status" value="1"/>
</dbReference>
<dbReference type="InterPro" id="IPR012340">
    <property type="entry name" value="NA-bd_OB-fold"/>
</dbReference>
<dbReference type="InterPro" id="IPR006196">
    <property type="entry name" value="RNA-binding_domain_S1_IF1"/>
</dbReference>
<dbReference type="InterPro" id="IPR003029">
    <property type="entry name" value="S1_domain"/>
</dbReference>
<dbReference type="InterPro" id="IPR004368">
    <property type="entry name" value="TIF_IF1"/>
</dbReference>
<dbReference type="NCBIfam" id="TIGR00008">
    <property type="entry name" value="infA"/>
    <property type="match status" value="1"/>
</dbReference>
<dbReference type="PANTHER" id="PTHR33370">
    <property type="entry name" value="TRANSLATION INITIATION FACTOR IF-1, CHLOROPLASTIC"/>
    <property type="match status" value="1"/>
</dbReference>
<dbReference type="PANTHER" id="PTHR33370:SF1">
    <property type="entry name" value="TRANSLATION INITIATION FACTOR IF-1, CHLOROPLASTIC"/>
    <property type="match status" value="1"/>
</dbReference>
<dbReference type="Pfam" id="PF01176">
    <property type="entry name" value="eIF-1a"/>
    <property type="match status" value="1"/>
</dbReference>
<dbReference type="SMART" id="SM00316">
    <property type="entry name" value="S1"/>
    <property type="match status" value="1"/>
</dbReference>
<dbReference type="SUPFAM" id="SSF50249">
    <property type="entry name" value="Nucleic acid-binding proteins"/>
    <property type="match status" value="1"/>
</dbReference>
<dbReference type="PROSITE" id="PS50832">
    <property type="entry name" value="S1_IF1_TYPE"/>
    <property type="match status" value="1"/>
</dbReference>
<reference key="1">
    <citation type="journal article" date="2003" name="Nature">
        <title>The genome sequence of Bacillus anthracis Ames and comparison to closely related bacteria.</title>
        <authorList>
            <person name="Read T.D."/>
            <person name="Peterson S.N."/>
            <person name="Tourasse N.J."/>
            <person name="Baillie L.W."/>
            <person name="Paulsen I.T."/>
            <person name="Nelson K.E."/>
            <person name="Tettelin H."/>
            <person name="Fouts D.E."/>
            <person name="Eisen J.A."/>
            <person name="Gill S.R."/>
            <person name="Holtzapple E.K."/>
            <person name="Okstad O.A."/>
            <person name="Helgason E."/>
            <person name="Rilstone J."/>
            <person name="Wu M."/>
            <person name="Kolonay J.F."/>
            <person name="Beanan M.J."/>
            <person name="Dodson R.J."/>
            <person name="Brinkac L.M."/>
            <person name="Gwinn M.L."/>
            <person name="DeBoy R.T."/>
            <person name="Madpu R."/>
            <person name="Daugherty S.C."/>
            <person name="Durkin A.S."/>
            <person name="Haft D.H."/>
            <person name="Nelson W.C."/>
            <person name="Peterson J.D."/>
            <person name="Pop M."/>
            <person name="Khouri H.M."/>
            <person name="Radune D."/>
            <person name="Benton J.L."/>
            <person name="Mahamoud Y."/>
            <person name="Jiang L."/>
            <person name="Hance I.R."/>
            <person name="Weidman J.F."/>
            <person name="Berry K.J."/>
            <person name="Plaut R.D."/>
            <person name="Wolf A.M."/>
            <person name="Watkins K.L."/>
            <person name="Nierman W.C."/>
            <person name="Hazen A."/>
            <person name="Cline R.T."/>
            <person name="Redmond C."/>
            <person name="Thwaite J.E."/>
            <person name="White O."/>
            <person name="Salzberg S.L."/>
            <person name="Thomason B."/>
            <person name="Friedlander A.M."/>
            <person name="Koehler T.M."/>
            <person name="Hanna P.C."/>
            <person name="Kolstoe A.-B."/>
            <person name="Fraser C.M."/>
        </authorList>
    </citation>
    <scope>NUCLEOTIDE SEQUENCE [LARGE SCALE GENOMIC DNA]</scope>
    <source>
        <strain>Ames / isolate Porton</strain>
    </source>
</reference>
<reference key="2">
    <citation type="journal article" date="2009" name="J. Bacteriol.">
        <title>The complete genome sequence of Bacillus anthracis Ames 'Ancestor'.</title>
        <authorList>
            <person name="Ravel J."/>
            <person name="Jiang L."/>
            <person name="Stanley S.T."/>
            <person name="Wilson M.R."/>
            <person name="Decker R.S."/>
            <person name="Read T.D."/>
            <person name="Worsham P."/>
            <person name="Keim P.S."/>
            <person name="Salzberg S.L."/>
            <person name="Fraser-Liggett C.M."/>
            <person name="Rasko D.A."/>
        </authorList>
    </citation>
    <scope>NUCLEOTIDE SEQUENCE [LARGE SCALE GENOMIC DNA]</scope>
    <source>
        <strain>Ames ancestor</strain>
    </source>
</reference>
<reference key="3">
    <citation type="submission" date="2004-01" db="EMBL/GenBank/DDBJ databases">
        <title>Complete genome sequence of Bacillus anthracis Sterne.</title>
        <authorList>
            <person name="Brettin T.S."/>
            <person name="Bruce D."/>
            <person name="Challacombe J.F."/>
            <person name="Gilna P."/>
            <person name="Han C."/>
            <person name="Hill K."/>
            <person name="Hitchcock P."/>
            <person name="Jackson P."/>
            <person name="Keim P."/>
            <person name="Longmire J."/>
            <person name="Lucas S."/>
            <person name="Okinaka R."/>
            <person name="Richardson P."/>
            <person name="Rubin E."/>
            <person name="Tice H."/>
        </authorList>
    </citation>
    <scope>NUCLEOTIDE SEQUENCE [LARGE SCALE GENOMIC DNA]</scope>
    <source>
        <strain>Sterne</strain>
    </source>
</reference>
<proteinExistence type="inferred from homology"/>